<dbReference type="EC" id="6.1.1.20"/>
<dbReference type="EMBL" id="AE000657">
    <property type="protein sequence ID" value="AAC07582.1"/>
    <property type="molecule type" value="Genomic_DNA"/>
</dbReference>
<dbReference type="PIR" id="B70449">
    <property type="entry name" value="B70449"/>
</dbReference>
<dbReference type="RefSeq" id="NP_214186.1">
    <property type="nucleotide sequence ID" value="NC_000918.1"/>
</dbReference>
<dbReference type="RefSeq" id="WP_010881123.1">
    <property type="nucleotide sequence ID" value="NC_000918.1"/>
</dbReference>
<dbReference type="SMR" id="O67620"/>
<dbReference type="FunCoup" id="O67620">
    <property type="interactions" value="423"/>
</dbReference>
<dbReference type="STRING" id="224324.aq_1730"/>
<dbReference type="EnsemblBacteria" id="AAC07582">
    <property type="protein sequence ID" value="AAC07582"/>
    <property type="gene ID" value="aq_1730"/>
</dbReference>
<dbReference type="KEGG" id="aae:aq_1730"/>
<dbReference type="PATRIC" id="fig|224324.8.peg.1332"/>
<dbReference type="eggNOG" id="COG0072">
    <property type="taxonomic scope" value="Bacteria"/>
</dbReference>
<dbReference type="eggNOG" id="COG0073">
    <property type="taxonomic scope" value="Bacteria"/>
</dbReference>
<dbReference type="HOGENOM" id="CLU_016891_0_0_0"/>
<dbReference type="InParanoid" id="O67620"/>
<dbReference type="OrthoDB" id="9805455at2"/>
<dbReference type="Proteomes" id="UP000000798">
    <property type="component" value="Chromosome"/>
</dbReference>
<dbReference type="GO" id="GO:0009328">
    <property type="term" value="C:phenylalanine-tRNA ligase complex"/>
    <property type="evidence" value="ECO:0000318"/>
    <property type="project" value="GO_Central"/>
</dbReference>
<dbReference type="GO" id="GO:0005524">
    <property type="term" value="F:ATP binding"/>
    <property type="evidence" value="ECO:0007669"/>
    <property type="project" value="UniProtKB-UniRule"/>
</dbReference>
<dbReference type="GO" id="GO:0000287">
    <property type="term" value="F:magnesium ion binding"/>
    <property type="evidence" value="ECO:0007669"/>
    <property type="project" value="UniProtKB-UniRule"/>
</dbReference>
<dbReference type="GO" id="GO:0004826">
    <property type="term" value="F:phenylalanine-tRNA ligase activity"/>
    <property type="evidence" value="ECO:0007669"/>
    <property type="project" value="UniProtKB-UniRule"/>
</dbReference>
<dbReference type="GO" id="GO:0000049">
    <property type="term" value="F:tRNA binding"/>
    <property type="evidence" value="ECO:0007669"/>
    <property type="project" value="UniProtKB-KW"/>
</dbReference>
<dbReference type="GO" id="GO:0006432">
    <property type="term" value="P:phenylalanyl-tRNA aminoacylation"/>
    <property type="evidence" value="ECO:0000318"/>
    <property type="project" value="GO_Central"/>
</dbReference>
<dbReference type="CDD" id="cd00769">
    <property type="entry name" value="PheRS_beta_core"/>
    <property type="match status" value="1"/>
</dbReference>
<dbReference type="CDD" id="cd02796">
    <property type="entry name" value="tRNA_bind_bactPheRS"/>
    <property type="match status" value="1"/>
</dbReference>
<dbReference type="FunFam" id="2.40.50.140:FF:000698">
    <property type="entry name" value="Phenylalanine--tRNA ligase beta subunit"/>
    <property type="match status" value="1"/>
</dbReference>
<dbReference type="FunFam" id="3.30.70.380:FF:000001">
    <property type="entry name" value="Phenylalanine--tRNA ligase beta subunit"/>
    <property type="match status" value="1"/>
</dbReference>
<dbReference type="FunFam" id="3.50.40.10:FF:000001">
    <property type="entry name" value="Phenylalanine--tRNA ligase beta subunit"/>
    <property type="match status" value="1"/>
</dbReference>
<dbReference type="Gene3D" id="3.30.56.10">
    <property type="match status" value="2"/>
</dbReference>
<dbReference type="Gene3D" id="3.30.930.10">
    <property type="entry name" value="Bira Bifunctional Protein, Domain 2"/>
    <property type="match status" value="1"/>
</dbReference>
<dbReference type="Gene3D" id="3.30.70.380">
    <property type="entry name" value="Ferrodoxin-fold anticodon-binding domain"/>
    <property type="match status" value="1"/>
</dbReference>
<dbReference type="Gene3D" id="2.40.50.140">
    <property type="entry name" value="Nucleic acid-binding proteins"/>
    <property type="match status" value="1"/>
</dbReference>
<dbReference type="Gene3D" id="3.50.40.10">
    <property type="entry name" value="Phenylalanyl-trna Synthetase, Chain B, domain 3"/>
    <property type="match status" value="1"/>
</dbReference>
<dbReference type="HAMAP" id="MF_00283">
    <property type="entry name" value="Phe_tRNA_synth_beta1"/>
    <property type="match status" value="1"/>
</dbReference>
<dbReference type="InterPro" id="IPR045864">
    <property type="entry name" value="aa-tRNA-synth_II/BPL/LPL"/>
</dbReference>
<dbReference type="InterPro" id="IPR005146">
    <property type="entry name" value="B3/B4_tRNA-bd"/>
</dbReference>
<dbReference type="InterPro" id="IPR009061">
    <property type="entry name" value="DNA-bd_dom_put_sf"/>
</dbReference>
<dbReference type="InterPro" id="IPR005121">
    <property type="entry name" value="Fdx_antiC-bd"/>
</dbReference>
<dbReference type="InterPro" id="IPR036690">
    <property type="entry name" value="Fdx_antiC-bd_sf"/>
</dbReference>
<dbReference type="InterPro" id="IPR012340">
    <property type="entry name" value="NA-bd_OB-fold"/>
</dbReference>
<dbReference type="InterPro" id="IPR045060">
    <property type="entry name" value="Phe-tRNA-ligase_IIc_bsu"/>
</dbReference>
<dbReference type="InterPro" id="IPR004532">
    <property type="entry name" value="Phe-tRNA-ligase_IIc_bsu_bact"/>
</dbReference>
<dbReference type="InterPro" id="IPR020825">
    <property type="entry name" value="Phe-tRNA_synthase-like_B3/B4"/>
</dbReference>
<dbReference type="InterPro" id="IPR041616">
    <property type="entry name" value="PheRS_beta_core"/>
</dbReference>
<dbReference type="InterPro" id="IPR002547">
    <property type="entry name" value="tRNA-bd_dom"/>
</dbReference>
<dbReference type="InterPro" id="IPR033714">
    <property type="entry name" value="tRNA_bind_bactPheRS"/>
</dbReference>
<dbReference type="InterPro" id="IPR005147">
    <property type="entry name" value="tRNA_synthase_B5-dom"/>
</dbReference>
<dbReference type="NCBIfam" id="TIGR00472">
    <property type="entry name" value="pheT_bact"/>
    <property type="match status" value="1"/>
</dbReference>
<dbReference type="PANTHER" id="PTHR10947:SF0">
    <property type="entry name" value="PHENYLALANINE--TRNA LIGASE BETA SUBUNIT"/>
    <property type="match status" value="1"/>
</dbReference>
<dbReference type="PANTHER" id="PTHR10947">
    <property type="entry name" value="PHENYLALANYL-TRNA SYNTHETASE BETA CHAIN AND LEUCINE-RICH REPEAT-CONTAINING PROTEIN 47"/>
    <property type="match status" value="1"/>
</dbReference>
<dbReference type="Pfam" id="PF03483">
    <property type="entry name" value="B3_4"/>
    <property type="match status" value="1"/>
</dbReference>
<dbReference type="Pfam" id="PF03484">
    <property type="entry name" value="B5"/>
    <property type="match status" value="1"/>
</dbReference>
<dbReference type="Pfam" id="PF03147">
    <property type="entry name" value="FDX-ACB"/>
    <property type="match status" value="1"/>
</dbReference>
<dbReference type="Pfam" id="PF01588">
    <property type="entry name" value="tRNA_bind"/>
    <property type="match status" value="1"/>
</dbReference>
<dbReference type="Pfam" id="PF17759">
    <property type="entry name" value="tRNA_synthFbeta"/>
    <property type="match status" value="1"/>
</dbReference>
<dbReference type="SMART" id="SM00873">
    <property type="entry name" value="B3_4"/>
    <property type="match status" value="1"/>
</dbReference>
<dbReference type="SMART" id="SM00874">
    <property type="entry name" value="B5"/>
    <property type="match status" value="1"/>
</dbReference>
<dbReference type="SMART" id="SM00896">
    <property type="entry name" value="FDX-ACB"/>
    <property type="match status" value="1"/>
</dbReference>
<dbReference type="SUPFAM" id="SSF54991">
    <property type="entry name" value="Anticodon-binding domain of PheRS"/>
    <property type="match status" value="1"/>
</dbReference>
<dbReference type="SUPFAM" id="SSF55681">
    <property type="entry name" value="Class II aaRS and biotin synthetases"/>
    <property type="match status" value="1"/>
</dbReference>
<dbReference type="SUPFAM" id="SSF50249">
    <property type="entry name" value="Nucleic acid-binding proteins"/>
    <property type="match status" value="1"/>
</dbReference>
<dbReference type="SUPFAM" id="SSF56037">
    <property type="entry name" value="PheT/TilS domain"/>
    <property type="match status" value="1"/>
</dbReference>
<dbReference type="SUPFAM" id="SSF46955">
    <property type="entry name" value="Putative DNA-binding domain"/>
    <property type="match status" value="1"/>
</dbReference>
<dbReference type="PROSITE" id="PS51483">
    <property type="entry name" value="B5"/>
    <property type="match status" value="1"/>
</dbReference>
<dbReference type="PROSITE" id="PS51447">
    <property type="entry name" value="FDX_ACB"/>
    <property type="match status" value="1"/>
</dbReference>
<dbReference type="PROSITE" id="PS50886">
    <property type="entry name" value="TRBD"/>
    <property type="match status" value="1"/>
</dbReference>
<comment type="catalytic activity">
    <reaction>
        <text>tRNA(Phe) + L-phenylalanine + ATP = L-phenylalanyl-tRNA(Phe) + AMP + diphosphate + H(+)</text>
        <dbReference type="Rhea" id="RHEA:19413"/>
        <dbReference type="Rhea" id="RHEA-COMP:9668"/>
        <dbReference type="Rhea" id="RHEA-COMP:9699"/>
        <dbReference type="ChEBI" id="CHEBI:15378"/>
        <dbReference type="ChEBI" id="CHEBI:30616"/>
        <dbReference type="ChEBI" id="CHEBI:33019"/>
        <dbReference type="ChEBI" id="CHEBI:58095"/>
        <dbReference type="ChEBI" id="CHEBI:78442"/>
        <dbReference type="ChEBI" id="CHEBI:78531"/>
        <dbReference type="ChEBI" id="CHEBI:456215"/>
        <dbReference type="EC" id="6.1.1.20"/>
    </reaction>
</comment>
<comment type="cofactor">
    <cofactor evidence="1">
        <name>Mg(2+)</name>
        <dbReference type="ChEBI" id="CHEBI:18420"/>
    </cofactor>
    <text evidence="1">Binds 2 magnesium ions per tetramer.</text>
</comment>
<comment type="subunit">
    <text evidence="1">Tetramer of two alpha and two beta subunits.</text>
</comment>
<comment type="subcellular location">
    <subcellularLocation>
        <location evidence="1">Cytoplasm</location>
    </subcellularLocation>
</comment>
<comment type="similarity">
    <text evidence="2">Belongs to the phenylalanyl-tRNA synthetase beta subunit family. Type 1 subfamily.</text>
</comment>
<gene>
    <name type="primary">pheT</name>
    <name type="ordered locus">aq_1730</name>
</gene>
<reference key="1">
    <citation type="journal article" date="1998" name="Nature">
        <title>The complete genome of the hyperthermophilic bacterium Aquifex aeolicus.</title>
        <authorList>
            <person name="Deckert G."/>
            <person name="Warren P.V."/>
            <person name="Gaasterland T."/>
            <person name="Young W.G."/>
            <person name="Lenox A.L."/>
            <person name="Graham D.E."/>
            <person name="Overbeek R."/>
            <person name="Snead M.A."/>
            <person name="Keller M."/>
            <person name="Aujay M."/>
            <person name="Huber R."/>
            <person name="Feldman R.A."/>
            <person name="Short J.M."/>
            <person name="Olsen G.J."/>
            <person name="Swanson R.V."/>
        </authorList>
    </citation>
    <scope>NUCLEOTIDE SEQUENCE [LARGE SCALE GENOMIC DNA]</scope>
    <source>
        <strain>VF5</strain>
    </source>
</reference>
<organism>
    <name type="scientific">Aquifex aeolicus (strain VF5)</name>
    <dbReference type="NCBI Taxonomy" id="224324"/>
    <lineage>
        <taxon>Bacteria</taxon>
        <taxon>Pseudomonadati</taxon>
        <taxon>Aquificota</taxon>
        <taxon>Aquificia</taxon>
        <taxon>Aquificales</taxon>
        <taxon>Aquificaceae</taxon>
        <taxon>Aquifex</taxon>
    </lineage>
</organism>
<feature type="chain" id="PRO_0000126834" description="Phenylalanine--tRNA ligase beta subunit">
    <location>
        <begin position="1"/>
        <end position="775"/>
    </location>
</feature>
<feature type="domain" description="tRNA-binding">
    <location>
        <begin position="39"/>
        <end position="147"/>
    </location>
</feature>
<feature type="domain" description="B5">
    <location>
        <begin position="394"/>
        <end position="470"/>
    </location>
</feature>
<feature type="domain" description="FDX-ACB">
    <location>
        <begin position="681"/>
        <end position="774"/>
    </location>
</feature>
<feature type="binding site" evidence="1">
    <location>
        <position position="448"/>
    </location>
    <ligand>
        <name>Mg(2+)</name>
        <dbReference type="ChEBI" id="CHEBI:18420"/>
        <note>shared with alpha subunit</note>
    </ligand>
</feature>
<feature type="binding site" evidence="1">
    <location>
        <position position="454"/>
    </location>
    <ligand>
        <name>Mg(2+)</name>
        <dbReference type="ChEBI" id="CHEBI:18420"/>
        <note>shared with alpha subunit</note>
    </ligand>
</feature>
<feature type="binding site" evidence="1">
    <location>
        <position position="457"/>
    </location>
    <ligand>
        <name>Mg(2+)</name>
        <dbReference type="ChEBI" id="CHEBI:18420"/>
        <note>shared with alpha subunit</note>
    </ligand>
</feature>
<feature type="binding site" evidence="1">
    <location>
        <position position="458"/>
    </location>
    <ligand>
        <name>Mg(2+)</name>
        <dbReference type="ChEBI" id="CHEBI:18420"/>
        <note>shared with alpha subunit</note>
    </ligand>
</feature>
<evidence type="ECO:0000250" key="1"/>
<evidence type="ECO:0000305" key="2"/>
<sequence>MKVPYSWLSEFVELSDVSPEEIAEKLSLRSVEATVETFGIDLDGVVFGKVVEVKEHPTKKKLAVVKVQVQEHIFIDVVTVDKSVREGDGVIVALPNAKVGNMCVTEREFDGVVSKGLLLSAQELGLEEKSEGVLKIHEDFKPGTDANEILGFGEKIIEIDITPNRGDMLSVRGVARDLSAIFRLPKKKPEEPTYEETGEFFIEIEDEDCKRYRGVVIEGVEIKESPLYIKKRLWQCGIKSINNVVDITNYVMLRDGQPLHAFDLSKVEGGIIVRSAKKGEKIITLDGEERELDEDILVIADREKPLAVAGVIGGLESGIKENTKDILLESAYFNPFRVRKASKKLGIQTESSYRFERNVDIERVDRAQDYAVYLILKHAGGKVKVVKDVYREKYKPKKVFLPQGKYIRYAGESYKNEEVKEILDALEIPNEIMRCGVEVLVPSHRSFDIQRDVDLIEEIMRVKGYEHYTSETLKLPSIANLWKDNLLEVKKYLRDKGLTEVINFSFEDSKLYELLNLPLPELEVINPLNPTQRYMRNTLITSLLRTAVYNDRNYNYDQAVFELGKVFFKEGEENRLGILLKGNKPRTLKEEKWEPYDLTEIIAGIFALFGLEPEFRNAKRNFLHPYVQGEVYLEGEFVGFFGKLHPKIAKELELKGEPFVAEIEIERVLSKKRLPHYREVAKFPPVVRDIALVMDKELDVNKLLIDTKSQIGELLEEVRVFDVYTGEKVGEGKKSVAVRLVLRSKTGSLKDEEANELVNKLVNYLKEKYGVELRT</sequence>
<name>SYFB_AQUAE</name>
<accession>O67620</accession>
<proteinExistence type="inferred from homology"/>
<protein>
    <recommendedName>
        <fullName>Phenylalanine--tRNA ligase beta subunit</fullName>
        <ecNumber>6.1.1.20</ecNumber>
    </recommendedName>
    <alternativeName>
        <fullName>Phenylalanyl-tRNA synthetase beta subunit</fullName>
        <shortName>PheRS</shortName>
    </alternativeName>
</protein>
<keyword id="KW-0030">Aminoacyl-tRNA synthetase</keyword>
<keyword id="KW-0067">ATP-binding</keyword>
<keyword id="KW-0963">Cytoplasm</keyword>
<keyword id="KW-0436">Ligase</keyword>
<keyword id="KW-0460">Magnesium</keyword>
<keyword id="KW-0479">Metal-binding</keyword>
<keyword id="KW-0547">Nucleotide-binding</keyword>
<keyword id="KW-0648">Protein biosynthesis</keyword>
<keyword id="KW-1185">Reference proteome</keyword>
<keyword id="KW-0694">RNA-binding</keyword>
<keyword id="KW-0820">tRNA-binding</keyword>